<name>NLTP4_VITSX</name>
<protein>
    <recommendedName>
        <fullName>Non-specific lipid-transfer protein P4</fullName>
        <shortName>LTP P4</shortName>
    </recommendedName>
</protein>
<comment type="function">
    <text>Plant non-specific lipid-transfer proteins transfer phospholipids as well as galactolipids across membranes. May play a role in wax or cutin deposition in the cell walls of expanding epidermal cells and certain secretory tissues.</text>
</comment>
<comment type="subcellular location">
    <subcellularLocation>
        <location>Secreted</location>
    </subcellularLocation>
</comment>
<comment type="similarity">
    <text evidence="1">Belongs to the plant LTP family.</text>
</comment>
<reference key="1">
    <citation type="journal article" date="1993" name="Eur. J. Biochem.">
        <title>Four 9-kDa proteins excreted by somatic embryos of grapevine are isoforms of lipid-transfer proteins.</title>
        <authorList>
            <person name="Coutos-Thevenot P."/>
            <person name="Jouenne T."/>
            <person name="Maes O."/>
            <person name="Guerbette F."/>
            <person name="Grosbois M."/>
            <person name="Le Caer J.-P."/>
            <person name="Boulay M."/>
            <person name="Deloire A."/>
            <person name="Kader J.-C."/>
            <person name="Guern J."/>
        </authorList>
    </citation>
    <scope>PROTEIN SEQUENCE</scope>
    <source>
        <strain>V.vinifera X Berlanchen cv. Rootstock 41B</strain>
    </source>
</reference>
<evidence type="ECO:0000305" key="1"/>
<organism>
    <name type="scientific">Vitis sp.</name>
    <name type="common">Grape</name>
    <dbReference type="NCBI Taxonomy" id="3604"/>
    <lineage>
        <taxon>Eukaryota</taxon>
        <taxon>Viridiplantae</taxon>
        <taxon>Streptophyta</taxon>
        <taxon>Embryophyta</taxon>
        <taxon>Tracheophyta</taxon>
        <taxon>Spermatophyta</taxon>
        <taxon>Magnoliopsida</taxon>
        <taxon>eudicotyledons</taxon>
        <taxon>Gunneridae</taxon>
        <taxon>Pentapetalae</taxon>
        <taxon>rosids</taxon>
        <taxon>Vitales</taxon>
        <taxon>Vitaceae</taxon>
        <taxon>Viteae</taxon>
        <taxon>Vitis</taxon>
    </lineage>
</organism>
<accession>P80274</accession>
<feature type="chain" id="PRO_0000153887" description="Non-specific lipid-transfer protein P4">
    <location>
        <begin position="1"/>
        <end position="37" status="greater than"/>
    </location>
</feature>
<feature type="non-terminal residue">
    <location>
        <position position="37"/>
    </location>
</feature>
<sequence length="37" mass="3668">TVTCGQVASALSPCIDYLQKDGAVPAGSCCXKXLSSA</sequence>
<keyword id="KW-0903">Direct protein sequencing</keyword>
<keyword id="KW-0446">Lipid-binding</keyword>
<keyword id="KW-0964">Secreted</keyword>
<keyword id="KW-0813">Transport</keyword>
<dbReference type="PIR" id="S39037">
    <property type="entry name" value="S39037"/>
</dbReference>
<dbReference type="Allergome" id="3528">
    <property type="allergen name" value="Vit v 1.0101"/>
</dbReference>
<dbReference type="Allergome" id="679">
    <property type="allergen name" value="Vit v 1"/>
</dbReference>
<dbReference type="GO" id="GO:0005576">
    <property type="term" value="C:extracellular region"/>
    <property type="evidence" value="ECO:0007669"/>
    <property type="project" value="UniProtKB-SubCell"/>
</dbReference>
<dbReference type="GO" id="GO:0008289">
    <property type="term" value="F:lipid binding"/>
    <property type="evidence" value="ECO:0007669"/>
    <property type="project" value="UniProtKB-KW"/>
</dbReference>
<dbReference type="Gene3D" id="1.10.110.10">
    <property type="entry name" value="Plant lipid-transfer and hydrophobic proteins"/>
    <property type="match status" value="1"/>
</dbReference>
<dbReference type="InterPro" id="IPR036312">
    <property type="entry name" value="Bifun_inhib/LTP/seed_sf"/>
</dbReference>
<dbReference type="SUPFAM" id="SSF47699">
    <property type="entry name" value="Bifunctional inhibitor/lipid-transfer protein/seed storage 2S albumin"/>
    <property type="match status" value="1"/>
</dbReference>
<proteinExistence type="evidence at protein level"/>